<proteinExistence type="inferred from homology"/>
<dbReference type="EC" id="6.1.1.19" evidence="1"/>
<dbReference type="EMBL" id="AP006627">
    <property type="protein sequence ID" value="BAD66426.1"/>
    <property type="molecule type" value="Genomic_DNA"/>
</dbReference>
<dbReference type="RefSeq" id="WP_011248729.1">
    <property type="nucleotide sequence ID" value="NC_006582.1"/>
</dbReference>
<dbReference type="SMR" id="Q5WB34"/>
<dbReference type="STRING" id="66692.ABC3895"/>
<dbReference type="KEGG" id="bcl:ABC3895"/>
<dbReference type="eggNOG" id="COG0018">
    <property type="taxonomic scope" value="Bacteria"/>
</dbReference>
<dbReference type="HOGENOM" id="CLU_006406_0_1_9"/>
<dbReference type="OrthoDB" id="9805987at2"/>
<dbReference type="Proteomes" id="UP000001168">
    <property type="component" value="Chromosome"/>
</dbReference>
<dbReference type="GO" id="GO:0005737">
    <property type="term" value="C:cytoplasm"/>
    <property type="evidence" value="ECO:0007669"/>
    <property type="project" value="UniProtKB-SubCell"/>
</dbReference>
<dbReference type="GO" id="GO:0004814">
    <property type="term" value="F:arginine-tRNA ligase activity"/>
    <property type="evidence" value="ECO:0007669"/>
    <property type="project" value="UniProtKB-UniRule"/>
</dbReference>
<dbReference type="GO" id="GO:0005524">
    <property type="term" value="F:ATP binding"/>
    <property type="evidence" value="ECO:0007669"/>
    <property type="project" value="UniProtKB-UniRule"/>
</dbReference>
<dbReference type="GO" id="GO:0006420">
    <property type="term" value="P:arginyl-tRNA aminoacylation"/>
    <property type="evidence" value="ECO:0007669"/>
    <property type="project" value="UniProtKB-UniRule"/>
</dbReference>
<dbReference type="CDD" id="cd07956">
    <property type="entry name" value="Anticodon_Ia_Arg"/>
    <property type="match status" value="1"/>
</dbReference>
<dbReference type="CDD" id="cd00671">
    <property type="entry name" value="ArgRS_core"/>
    <property type="match status" value="1"/>
</dbReference>
<dbReference type="FunFam" id="1.10.730.10:FF:000008">
    <property type="entry name" value="Arginine--tRNA ligase"/>
    <property type="match status" value="1"/>
</dbReference>
<dbReference type="FunFam" id="3.30.1360.70:FF:000003">
    <property type="entry name" value="Arginine--tRNA ligase"/>
    <property type="match status" value="1"/>
</dbReference>
<dbReference type="FunFam" id="3.40.50.620:FF:000062">
    <property type="entry name" value="Arginine--tRNA ligase"/>
    <property type="match status" value="1"/>
</dbReference>
<dbReference type="Gene3D" id="3.30.1360.70">
    <property type="entry name" value="Arginyl tRNA synthetase N-terminal domain"/>
    <property type="match status" value="1"/>
</dbReference>
<dbReference type="Gene3D" id="3.40.50.620">
    <property type="entry name" value="HUPs"/>
    <property type="match status" value="1"/>
</dbReference>
<dbReference type="Gene3D" id="1.10.730.10">
    <property type="entry name" value="Isoleucyl-tRNA Synthetase, Domain 1"/>
    <property type="match status" value="1"/>
</dbReference>
<dbReference type="HAMAP" id="MF_00123">
    <property type="entry name" value="Arg_tRNA_synth"/>
    <property type="match status" value="1"/>
</dbReference>
<dbReference type="InterPro" id="IPR001412">
    <property type="entry name" value="aa-tRNA-synth_I_CS"/>
</dbReference>
<dbReference type="InterPro" id="IPR001278">
    <property type="entry name" value="Arg-tRNA-ligase"/>
</dbReference>
<dbReference type="InterPro" id="IPR005148">
    <property type="entry name" value="Arg-tRNA-synth_N"/>
</dbReference>
<dbReference type="InterPro" id="IPR036695">
    <property type="entry name" value="Arg-tRNA-synth_N_sf"/>
</dbReference>
<dbReference type="InterPro" id="IPR035684">
    <property type="entry name" value="ArgRS_core"/>
</dbReference>
<dbReference type="InterPro" id="IPR008909">
    <property type="entry name" value="DALR_anticod-bd"/>
</dbReference>
<dbReference type="InterPro" id="IPR014729">
    <property type="entry name" value="Rossmann-like_a/b/a_fold"/>
</dbReference>
<dbReference type="InterPro" id="IPR009080">
    <property type="entry name" value="tRNAsynth_Ia_anticodon-bd"/>
</dbReference>
<dbReference type="NCBIfam" id="TIGR00456">
    <property type="entry name" value="argS"/>
    <property type="match status" value="1"/>
</dbReference>
<dbReference type="PANTHER" id="PTHR11956:SF5">
    <property type="entry name" value="ARGININE--TRNA LIGASE, CYTOPLASMIC"/>
    <property type="match status" value="1"/>
</dbReference>
<dbReference type="PANTHER" id="PTHR11956">
    <property type="entry name" value="ARGINYL-TRNA SYNTHETASE"/>
    <property type="match status" value="1"/>
</dbReference>
<dbReference type="Pfam" id="PF03485">
    <property type="entry name" value="Arg_tRNA_synt_N"/>
    <property type="match status" value="1"/>
</dbReference>
<dbReference type="Pfam" id="PF05746">
    <property type="entry name" value="DALR_1"/>
    <property type="match status" value="1"/>
</dbReference>
<dbReference type="Pfam" id="PF00750">
    <property type="entry name" value="tRNA-synt_1d"/>
    <property type="match status" value="1"/>
</dbReference>
<dbReference type="PRINTS" id="PR01038">
    <property type="entry name" value="TRNASYNTHARG"/>
</dbReference>
<dbReference type="SMART" id="SM01016">
    <property type="entry name" value="Arg_tRNA_synt_N"/>
    <property type="match status" value="1"/>
</dbReference>
<dbReference type="SMART" id="SM00836">
    <property type="entry name" value="DALR_1"/>
    <property type="match status" value="1"/>
</dbReference>
<dbReference type="SUPFAM" id="SSF47323">
    <property type="entry name" value="Anticodon-binding domain of a subclass of class I aminoacyl-tRNA synthetases"/>
    <property type="match status" value="1"/>
</dbReference>
<dbReference type="SUPFAM" id="SSF55190">
    <property type="entry name" value="Arginyl-tRNA synthetase (ArgRS), N-terminal 'additional' domain"/>
    <property type="match status" value="1"/>
</dbReference>
<dbReference type="SUPFAM" id="SSF52374">
    <property type="entry name" value="Nucleotidylyl transferase"/>
    <property type="match status" value="1"/>
</dbReference>
<dbReference type="PROSITE" id="PS00178">
    <property type="entry name" value="AA_TRNA_LIGASE_I"/>
    <property type="match status" value="1"/>
</dbReference>
<gene>
    <name evidence="1" type="primary">argS</name>
    <name type="ordered locus">ABC3895</name>
</gene>
<comment type="catalytic activity">
    <reaction evidence="1">
        <text>tRNA(Arg) + L-arginine + ATP = L-arginyl-tRNA(Arg) + AMP + diphosphate</text>
        <dbReference type="Rhea" id="RHEA:20301"/>
        <dbReference type="Rhea" id="RHEA-COMP:9658"/>
        <dbReference type="Rhea" id="RHEA-COMP:9673"/>
        <dbReference type="ChEBI" id="CHEBI:30616"/>
        <dbReference type="ChEBI" id="CHEBI:32682"/>
        <dbReference type="ChEBI" id="CHEBI:33019"/>
        <dbReference type="ChEBI" id="CHEBI:78442"/>
        <dbReference type="ChEBI" id="CHEBI:78513"/>
        <dbReference type="ChEBI" id="CHEBI:456215"/>
        <dbReference type="EC" id="6.1.1.19"/>
    </reaction>
</comment>
<comment type="subunit">
    <text evidence="1">Monomer.</text>
</comment>
<comment type="subcellular location">
    <subcellularLocation>
        <location evidence="1">Cytoplasm</location>
    </subcellularLocation>
</comment>
<comment type="similarity">
    <text evidence="1">Belongs to the class-I aminoacyl-tRNA synthetase family.</text>
</comment>
<sequence length="556" mass="62498">MNHMERKKEQLRVEVRRAVLQAELATESEVPSVLLEAPKDKAHGDFATNIAMQLARIAKKAPRAIAEELVANFDRKQAGIEKIEIAGPGFINFFLDNGYLRELIPQVLTEKDDYGSSDVGQGEKVLIEFVSANPTGDLHLGHARGAAVGDTIANIMDKAGYKVSREYYINDAGNQIENLAASLNARYLQVLGEDQPMPEDGYHGQDIIDIAKQLVDEAGDQYRQLDEKERLAFMRDYGLKKELEKIKQDLNAYRVEFDKWFSETSLYESGQVERGLQVLKDKNETYEKDGATWLRSTAYGDDKDRVLVKQDGTYTYLTPDISYHLDKFDRGHDRLIDVLGADHHGYIPRMRAAIQALGYDPARFNVQIIQMVSLFQGGEKVKMSKRTGKAVTLRELMEEVGVDATRYFFAMRSPDTHLDFDMDLAVSKSNENPVYYIQYAHARVCSILRQGEELGIPYSANTDLSPIASEKEYELLKAIGEFPGAVAEAATKQIPQRIANYAYDLAQALHSFYNVTRVIDTENKDLSAARLALMKATQMTIKNALALLGVEAPEKM</sequence>
<name>SYR_SHOC1</name>
<protein>
    <recommendedName>
        <fullName evidence="1">Arginine--tRNA ligase</fullName>
        <ecNumber evidence="1">6.1.1.19</ecNumber>
    </recommendedName>
    <alternativeName>
        <fullName evidence="1">Arginyl-tRNA synthetase</fullName>
        <shortName evidence="1">ArgRS</shortName>
    </alternativeName>
</protein>
<keyword id="KW-0030">Aminoacyl-tRNA synthetase</keyword>
<keyword id="KW-0067">ATP-binding</keyword>
<keyword id="KW-0963">Cytoplasm</keyword>
<keyword id="KW-0436">Ligase</keyword>
<keyword id="KW-0547">Nucleotide-binding</keyword>
<keyword id="KW-0648">Protein biosynthesis</keyword>
<keyword id="KW-1185">Reference proteome</keyword>
<feature type="chain" id="PRO_0000241982" description="Arginine--tRNA ligase">
    <location>
        <begin position="1"/>
        <end position="556"/>
    </location>
</feature>
<feature type="short sequence motif" description="'HIGH' region">
    <location>
        <begin position="132"/>
        <end position="142"/>
    </location>
</feature>
<accession>Q5WB34</accession>
<organism>
    <name type="scientific">Shouchella clausii (strain KSM-K16)</name>
    <name type="common">Alkalihalobacillus clausii</name>
    <dbReference type="NCBI Taxonomy" id="66692"/>
    <lineage>
        <taxon>Bacteria</taxon>
        <taxon>Bacillati</taxon>
        <taxon>Bacillota</taxon>
        <taxon>Bacilli</taxon>
        <taxon>Bacillales</taxon>
        <taxon>Bacillaceae</taxon>
        <taxon>Shouchella</taxon>
    </lineage>
</organism>
<reference key="1">
    <citation type="submission" date="2003-10" db="EMBL/GenBank/DDBJ databases">
        <title>The complete genome sequence of the alkaliphilic Bacillus clausii KSM-K16.</title>
        <authorList>
            <person name="Takaki Y."/>
            <person name="Kageyama Y."/>
            <person name="Shimamura S."/>
            <person name="Suzuki H."/>
            <person name="Nishi S."/>
            <person name="Hatada Y."/>
            <person name="Kawai S."/>
            <person name="Ito S."/>
            <person name="Horikoshi K."/>
        </authorList>
    </citation>
    <scope>NUCLEOTIDE SEQUENCE [LARGE SCALE GENOMIC DNA]</scope>
    <source>
        <strain>KSM-K16</strain>
    </source>
</reference>
<evidence type="ECO:0000255" key="1">
    <source>
        <dbReference type="HAMAP-Rule" id="MF_00123"/>
    </source>
</evidence>